<protein>
    <recommendedName>
        <fullName evidence="1">Protein GrpE</fullName>
    </recommendedName>
    <alternativeName>
        <fullName evidence="1">HSP-70 cofactor</fullName>
    </alternativeName>
</protein>
<keyword id="KW-0143">Chaperone</keyword>
<keyword id="KW-0963">Cytoplasm</keyword>
<keyword id="KW-0346">Stress response</keyword>
<comment type="function">
    <text evidence="1">Participates actively in the response to hyperosmotic and heat shock by preventing the aggregation of stress-denatured proteins, in association with DnaK and GrpE. It is the nucleotide exchange factor for DnaK and may function as a thermosensor. Unfolded proteins bind initially to DnaJ; upon interaction with the DnaJ-bound protein, DnaK hydrolyzes its bound ATP, resulting in the formation of a stable complex. GrpE releases ADP from DnaK; ATP binding to DnaK triggers the release of the substrate protein, thus completing the reaction cycle. Several rounds of ATP-dependent interactions between DnaJ, DnaK and GrpE are required for fully efficient folding.</text>
</comment>
<comment type="subunit">
    <text evidence="1">Homodimer.</text>
</comment>
<comment type="subcellular location">
    <subcellularLocation>
        <location evidence="1">Cytoplasm</location>
    </subcellularLocation>
</comment>
<comment type="similarity">
    <text evidence="1">Belongs to the GrpE family.</text>
</comment>
<accession>B8EAU9</accession>
<dbReference type="EMBL" id="CP001252">
    <property type="protein sequence ID" value="ACK47491.1"/>
    <property type="molecule type" value="Genomic_DNA"/>
</dbReference>
<dbReference type="RefSeq" id="WP_006080881.1">
    <property type="nucleotide sequence ID" value="NC_011663.1"/>
</dbReference>
<dbReference type="SMR" id="B8EAU9"/>
<dbReference type="GeneID" id="11771635"/>
<dbReference type="KEGG" id="sbp:Sbal223_3005"/>
<dbReference type="HOGENOM" id="CLU_057217_6_0_6"/>
<dbReference type="Proteomes" id="UP000002507">
    <property type="component" value="Chromosome"/>
</dbReference>
<dbReference type="GO" id="GO:0005829">
    <property type="term" value="C:cytosol"/>
    <property type="evidence" value="ECO:0007669"/>
    <property type="project" value="TreeGrafter"/>
</dbReference>
<dbReference type="GO" id="GO:0000774">
    <property type="term" value="F:adenyl-nucleotide exchange factor activity"/>
    <property type="evidence" value="ECO:0007669"/>
    <property type="project" value="InterPro"/>
</dbReference>
<dbReference type="GO" id="GO:0042803">
    <property type="term" value="F:protein homodimerization activity"/>
    <property type="evidence" value="ECO:0007669"/>
    <property type="project" value="InterPro"/>
</dbReference>
<dbReference type="GO" id="GO:0051087">
    <property type="term" value="F:protein-folding chaperone binding"/>
    <property type="evidence" value="ECO:0007669"/>
    <property type="project" value="InterPro"/>
</dbReference>
<dbReference type="GO" id="GO:0051082">
    <property type="term" value="F:unfolded protein binding"/>
    <property type="evidence" value="ECO:0007669"/>
    <property type="project" value="TreeGrafter"/>
</dbReference>
<dbReference type="GO" id="GO:0006457">
    <property type="term" value="P:protein folding"/>
    <property type="evidence" value="ECO:0007669"/>
    <property type="project" value="InterPro"/>
</dbReference>
<dbReference type="CDD" id="cd00446">
    <property type="entry name" value="GrpE"/>
    <property type="match status" value="1"/>
</dbReference>
<dbReference type="FunFam" id="2.30.22.10:FF:000001">
    <property type="entry name" value="Protein GrpE"/>
    <property type="match status" value="1"/>
</dbReference>
<dbReference type="Gene3D" id="3.90.20.20">
    <property type="match status" value="1"/>
</dbReference>
<dbReference type="Gene3D" id="2.30.22.10">
    <property type="entry name" value="Head domain of nucleotide exchange factor GrpE"/>
    <property type="match status" value="1"/>
</dbReference>
<dbReference type="HAMAP" id="MF_01151">
    <property type="entry name" value="GrpE"/>
    <property type="match status" value="1"/>
</dbReference>
<dbReference type="InterPro" id="IPR000740">
    <property type="entry name" value="GrpE"/>
</dbReference>
<dbReference type="InterPro" id="IPR013805">
    <property type="entry name" value="GrpE_coiled_coil"/>
</dbReference>
<dbReference type="InterPro" id="IPR009012">
    <property type="entry name" value="GrpE_head"/>
</dbReference>
<dbReference type="NCBIfam" id="NF010737">
    <property type="entry name" value="PRK14139.1"/>
    <property type="match status" value="1"/>
</dbReference>
<dbReference type="NCBIfam" id="NF010738">
    <property type="entry name" value="PRK14140.1"/>
    <property type="match status" value="1"/>
</dbReference>
<dbReference type="NCBIfam" id="NF010748">
    <property type="entry name" value="PRK14150.1"/>
    <property type="match status" value="1"/>
</dbReference>
<dbReference type="PANTHER" id="PTHR21237">
    <property type="entry name" value="GRPE PROTEIN"/>
    <property type="match status" value="1"/>
</dbReference>
<dbReference type="PANTHER" id="PTHR21237:SF23">
    <property type="entry name" value="GRPE PROTEIN HOMOLOG, MITOCHONDRIAL"/>
    <property type="match status" value="1"/>
</dbReference>
<dbReference type="Pfam" id="PF01025">
    <property type="entry name" value="GrpE"/>
    <property type="match status" value="1"/>
</dbReference>
<dbReference type="PRINTS" id="PR00773">
    <property type="entry name" value="GRPEPROTEIN"/>
</dbReference>
<dbReference type="SUPFAM" id="SSF58014">
    <property type="entry name" value="Coiled-coil domain of nucleotide exchange factor GrpE"/>
    <property type="match status" value="1"/>
</dbReference>
<dbReference type="SUPFAM" id="SSF51064">
    <property type="entry name" value="Head domain of nucleotide exchange factor GrpE"/>
    <property type="match status" value="1"/>
</dbReference>
<dbReference type="PROSITE" id="PS01071">
    <property type="entry name" value="GRPE"/>
    <property type="match status" value="1"/>
</dbReference>
<sequence>MSNESIKAEQDLIQEGVESEVSTAEASLIDELTQANFRIEELEQLLAEALAKVEEQKDSVIRAAAEVDNIRRRAAMDVEKANKFALEKFANELLPVLDNMERALMGTNPEDEATKSIYQGVELTQKSLLTAVAKFGVKQIDPQGQSFNPDQHQAIGMQPSAEFPANTVMLVMQKGYELNSRLLRPAMVMVSQGGPNQESATIDIEA</sequence>
<feature type="chain" id="PRO_1000164214" description="Protein GrpE">
    <location>
        <begin position="1"/>
        <end position="206"/>
    </location>
</feature>
<evidence type="ECO:0000255" key="1">
    <source>
        <dbReference type="HAMAP-Rule" id="MF_01151"/>
    </source>
</evidence>
<organism>
    <name type="scientific">Shewanella baltica (strain OS223)</name>
    <dbReference type="NCBI Taxonomy" id="407976"/>
    <lineage>
        <taxon>Bacteria</taxon>
        <taxon>Pseudomonadati</taxon>
        <taxon>Pseudomonadota</taxon>
        <taxon>Gammaproteobacteria</taxon>
        <taxon>Alteromonadales</taxon>
        <taxon>Shewanellaceae</taxon>
        <taxon>Shewanella</taxon>
    </lineage>
</organism>
<reference key="1">
    <citation type="submission" date="2008-12" db="EMBL/GenBank/DDBJ databases">
        <title>Complete sequence of chromosome of Shewanella baltica OS223.</title>
        <authorList>
            <consortium name="US DOE Joint Genome Institute"/>
            <person name="Lucas S."/>
            <person name="Copeland A."/>
            <person name="Lapidus A."/>
            <person name="Glavina del Rio T."/>
            <person name="Dalin E."/>
            <person name="Tice H."/>
            <person name="Bruce D."/>
            <person name="Goodwin L."/>
            <person name="Pitluck S."/>
            <person name="Chertkov O."/>
            <person name="Meincke L."/>
            <person name="Brettin T."/>
            <person name="Detter J.C."/>
            <person name="Han C."/>
            <person name="Kuske C.R."/>
            <person name="Larimer F."/>
            <person name="Land M."/>
            <person name="Hauser L."/>
            <person name="Kyrpides N."/>
            <person name="Ovchinnikova G."/>
            <person name="Brettar I."/>
            <person name="Rodrigues J."/>
            <person name="Konstantinidis K."/>
            <person name="Tiedje J."/>
        </authorList>
    </citation>
    <scope>NUCLEOTIDE SEQUENCE [LARGE SCALE GENOMIC DNA]</scope>
    <source>
        <strain>OS223</strain>
    </source>
</reference>
<gene>
    <name evidence="1" type="primary">grpE</name>
    <name type="ordered locus">Sbal223_3005</name>
</gene>
<proteinExistence type="inferred from homology"/>
<name>GRPE_SHEB2</name>